<proteinExistence type="evidence at transcript level"/>
<accession>P30524</accession>
<sequence length="523" mass="57933">MSSMQFSSVLPLEGKACVSPVRREGSACERLKIGDSSSIRHERASRRMCNGGARGPAATGAQCVLTSDASPADTLVLRTSFRRNYADPNEVAAVILGGGTGTQLFPLTSTRATPAVPIGGCYRLIDIPMSNCFNSGINKIFVMTQFNSASLNRHIHRTYLGGGINFTDGSVEVLAATQMPGEAAGWFRGTADAVRKFIWVLEDYYKHKSIEHILILSGDQLYRMDYMELVQKHVDDNADITLSCAPVGESRASEYGLVKFDSSGRVIQFSEKPKGDDLEAMKVDTSFLNFAIDDPAKYPYIASMGVYVFKRDVLLNLLKSRYAELHDFGSEILPRALHDHNVQAYVFTDYWEDIGTIRSFFDANMALCEQPPKFEFYDPKTPFFTSPRYLPPTKSDKCRIKEAIISHGCFLRECKIEHSIIGVRSRLNSGSELKNAMMMGADSYETEDEISRLMSEGKVPIGVGENTKISNCIIDMNARIGRDVVISNKEGVQEADRPEEGYYIRSGIVVIQKNATIKDGTVV</sequence>
<organism>
    <name type="scientific">Hordeum vulgare</name>
    <name type="common">Barley</name>
    <dbReference type="NCBI Taxonomy" id="4513"/>
    <lineage>
        <taxon>Eukaryota</taxon>
        <taxon>Viridiplantae</taxon>
        <taxon>Streptophyta</taxon>
        <taxon>Embryophyta</taxon>
        <taxon>Tracheophyta</taxon>
        <taxon>Spermatophyta</taxon>
        <taxon>Magnoliopsida</taxon>
        <taxon>Liliopsida</taxon>
        <taxon>Poales</taxon>
        <taxon>Poaceae</taxon>
        <taxon>BOP clade</taxon>
        <taxon>Pooideae</taxon>
        <taxon>Triticodae</taxon>
        <taxon>Triticeae</taxon>
        <taxon>Hordeinae</taxon>
        <taxon>Hordeum</taxon>
    </lineage>
</organism>
<name>GLGL1_HORVU</name>
<dbReference type="EC" id="2.7.7.27"/>
<dbReference type="EMBL" id="X67151">
    <property type="protein sequence ID" value="CAA47626.1"/>
    <property type="molecule type" value="mRNA"/>
</dbReference>
<dbReference type="EMBL" id="X62242">
    <property type="protein sequence ID" value="CAB37841.1"/>
    <property type="molecule type" value="mRNA"/>
</dbReference>
<dbReference type="PIR" id="S24984">
    <property type="entry name" value="S24984"/>
</dbReference>
<dbReference type="SMR" id="P30524"/>
<dbReference type="OMA" id="RKWPLHT"/>
<dbReference type="BRENDA" id="2.7.7.27">
    <property type="organism ID" value="2687"/>
</dbReference>
<dbReference type="SABIO-RK" id="P30524"/>
<dbReference type="UniPathway" id="UPA00152"/>
<dbReference type="ExpressionAtlas" id="P30524">
    <property type="expression patterns" value="baseline and differential"/>
</dbReference>
<dbReference type="GO" id="GO:0009501">
    <property type="term" value="C:amyloplast"/>
    <property type="evidence" value="ECO:0007669"/>
    <property type="project" value="UniProtKB-SubCell"/>
</dbReference>
<dbReference type="GO" id="GO:0009507">
    <property type="term" value="C:chloroplast"/>
    <property type="evidence" value="ECO:0007669"/>
    <property type="project" value="UniProtKB-SubCell"/>
</dbReference>
<dbReference type="GO" id="GO:0005524">
    <property type="term" value="F:ATP binding"/>
    <property type="evidence" value="ECO:0007669"/>
    <property type="project" value="UniProtKB-KW"/>
</dbReference>
<dbReference type="GO" id="GO:0008878">
    <property type="term" value="F:glucose-1-phosphate adenylyltransferase activity"/>
    <property type="evidence" value="ECO:0007669"/>
    <property type="project" value="UniProtKB-EC"/>
</dbReference>
<dbReference type="GO" id="GO:0005978">
    <property type="term" value="P:glycogen biosynthetic process"/>
    <property type="evidence" value="ECO:0007669"/>
    <property type="project" value="InterPro"/>
</dbReference>
<dbReference type="GO" id="GO:0019252">
    <property type="term" value="P:starch biosynthetic process"/>
    <property type="evidence" value="ECO:0007669"/>
    <property type="project" value="UniProtKB-UniPathway"/>
</dbReference>
<dbReference type="CDD" id="cd02508">
    <property type="entry name" value="ADP_Glucose_PP"/>
    <property type="match status" value="1"/>
</dbReference>
<dbReference type="CDD" id="cd04651">
    <property type="entry name" value="LbH_G1P_AT_C"/>
    <property type="match status" value="1"/>
</dbReference>
<dbReference type="FunFam" id="3.90.550.10:FF:000030">
    <property type="entry name" value="Glucose-1-phosphate adenylyltransferase"/>
    <property type="match status" value="1"/>
</dbReference>
<dbReference type="Gene3D" id="2.160.10.10">
    <property type="entry name" value="Hexapeptide repeat proteins"/>
    <property type="match status" value="1"/>
</dbReference>
<dbReference type="Gene3D" id="3.90.550.10">
    <property type="entry name" value="Spore Coat Polysaccharide Biosynthesis Protein SpsA, Chain A"/>
    <property type="match status" value="1"/>
</dbReference>
<dbReference type="InterPro" id="IPR011831">
    <property type="entry name" value="ADP-Glc_PPase"/>
</dbReference>
<dbReference type="InterPro" id="IPR005836">
    <property type="entry name" value="ADP_Glu_pyroP_CS"/>
</dbReference>
<dbReference type="InterPro" id="IPR005835">
    <property type="entry name" value="NTP_transferase_dom"/>
</dbReference>
<dbReference type="InterPro" id="IPR029044">
    <property type="entry name" value="Nucleotide-diphossugar_trans"/>
</dbReference>
<dbReference type="InterPro" id="IPR011004">
    <property type="entry name" value="Trimer_LpxA-like_sf"/>
</dbReference>
<dbReference type="NCBIfam" id="TIGR02091">
    <property type="entry name" value="glgC"/>
    <property type="match status" value="1"/>
</dbReference>
<dbReference type="NCBIfam" id="NF002772">
    <property type="entry name" value="PRK02862.1"/>
    <property type="match status" value="1"/>
</dbReference>
<dbReference type="PANTHER" id="PTHR43523:SF12">
    <property type="entry name" value="GLUCOSE-1-PHOSPHATE ADENYLYLTRANSFERASE LARGE SUBUNIT 1, CHLOROPLASTIC-RELATED"/>
    <property type="match status" value="1"/>
</dbReference>
<dbReference type="PANTHER" id="PTHR43523">
    <property type="entry name" value="GLUCOSE-1-PHOSPHATE ADENYLYLTRANSFERASE-RELATED"/>
    <property type="match status" value="1"/>
</dbReference>
<dbReference type="Pfam" id="PF25247">
    <property type="entry name" value="LbH_GLGC"/>
    <property type="match status" value="1"/>
</dbReference>
<dbReference type="Pfam" id="PF00483">
    <property type="entry name" value="NTP_transferase"/>
    <property type="match status" value="1"/>
</dbReference>
<dbReference type="SUPFAM" id="SSF53448">
    <property type="entry name" value="Nucleotide-diphospho-sugar transferases"/>
    <property type="match status" value="1"/>
</dbReference>
<dbReference type="SUPFAM" id="SSF51161">
    <property type="entry name" value="Trimeric LpxA-like enzymes"/>
    <property type="match status" value="1"/>
</dbReference>
<dbReference type="PROSITE" id="PS00808">
    <property type="entry name" value="ADP_GLC_PYROPHOSPH_1"/>
    <property type="match status" value="1"/>
</dbReference>
<dbReference type="PROSITE" id="PS00809">
    <property type="entry name" value="ADP_GLC_PYROPHOSPH_2"/>
    <property type="match status" value="1"/>
</dbReference>
<dbReference type="PROSITE" id="PS00810">
    <property type="entry name" value="ADP_GLC_PYROPHOSPH_3"/>
    <property type="match status" value="1"/>
</dbReference>
<evidence type="ECO:0000255" key="1"/>
<evidence type="ECO:0000305" key="2"/>
<keyword id="KW-0021">Allosteric enzyme</keyword>
<keyword id="KW-0035">Amyloplast</keyword>
<keyword id="KW-0067">ATP-binding</keyword>
<keyword id="KW-0150">Chloroplast</keyword>
<keyword id="KW-0547">Nucleotide-binding</keyword>
<keyword id="KW-0548">Nucleotidyltransferase</keyword>
<keyword id="KW-0934">Plastid</keyword>
<keyword id="KW-0750">Starch biosynthesis</keyword>
<keyword id="KW-0808">Transferase</keyword>
<keyword id="KW-0809">Transit peptide</keyword>
<comment type="function">
    <text>This protein plays a role in synthesis of starch. It catalyzes the synthesis of the activated glycosyl donor, ADP-glucose from Glc-1-P and ATP.</text>
</comment>
<comment type="catalytic activity">
    <reaction>
        <text>alpha-D-glucose 1-phosphate + ATP + H(+) = ADP-alpha-D-glucose + diphosphate</text>
        <dbReference type="Rhea" id="RHEA:12120"/>
        <dbReference type="ChEBI" id="CHEBI:15378"/>
        <dbReference type="ChEBI" id="CHEBI:30616"/>
        <dbReference type="ChEBI" id="CHEBI:33019"/>
        <dbReference type="ChEBI" id="CHEBI:57498"/>
        <dbReference type="ChEBI" id="CHEBI:58601"/>
        <dbReference type="EC" id="2.7.7.27"/>
    </reaction>
</comment>
<comment type="activity regulation">
    <text>Highly active without 3'phosphoglycerate, and is only slightly affected by the activator 3'phosphoglycerate and inhibitor orthophosphate.</text>
</comment>
<comment type="pathway">
    <text>Glycan biosynthesis; starch biosynthesis.</text>
</comment>
<comment type="subunit">
    <text>Heterotetramer.</text>
</comment>
<comment type="subcellular location">
    <subcellularLocation>
        <location>Plastid</location>
        <location>Chloroplast</location>
    </subcellularLocation>
    <subcellularLocation>
        <location>Plastid</location>
        <location>Amyloplast</location>
    </subcellularLocation>
    <text>Found in the chloroplast in leaf. Found in the plastid in the developing endosperm.</text>
</comment>
<comment type="tissue specificity">
    <text>Starchy endosperm and roots.</text>
</comment>
<comment type="similarity">
    <text evidence="2">Belongs to the bacterial/plant glucose-1-phosphate adenylyltransferase family.</text>
</comment>
<reference key="1">
    <citation type="journal article" date="1992" name="Plant Physiol.">
        <title>ADP-glucose pyrophosphorylase large subunit cDNA from barley endosperm.</title>
        <authorList>
            <person name="Villand P."/>
            <person name="Olsen O.-A."/>
            <person name="Kilian A."/>
            <person name="Kleczkowski L.A."/>
        </authorList>
    </citation>
    <scope>NUCLEOTIDE SEQUENCE [MRNA]</scope>
    <source>
        <strain>cv. Bomi</strain>
        <tissue>Endosperm</tissue>
    </source>
</reference>
<reference key="2">
    <citation type="submission" date="1996-04" db="EMBL/GenBank/DDBJ databases">
        <authorList>
            <person name="Villand P."/>
        </authorList>
    </citation>
    <scope>SEQUENCE REVISION</scope>
</reference>
<reference key="3">
    <citation type="journal article" date="1992" name="Plant Mol. Biol.">
        <title>PCR amplification and sequences of cDNA clones for the small and large subunits of ADP-glucose pyrophosphorylase from barley tissues.</title>
        <authorList>
            <person name="Villand P."/>
            <person name="Aalen R."/>
            <person name="Olsen O.-A."/>
            <person name="Luethi E."/>
            <person name="Loenneborg A."/>
            <person name="Kleczkowski L.A."/>
        </authorList>
    </citation>
    <scope>NUCLEOTIDE SEQUENCE [MRNA] OF 267-480</scope>
    <source>
        <strain>cv. Bomi</strain>
        <tissue>Seed</tissue>
    </source>
</reference>
<feature type="transit peptide" description="Chloroplast" evidence="1">
    <location>
        <begin position="1"/>
        <end position="49"/>
    </location>
</feature>
<feature type="chain" id="PRO_0000011164" description="Glucose-1-phosphate adenylyltransferase large subunit 1, chloroplastic/amyloplastic">
    <location>
        <begin position="50"/>
        <end position="523"/>
    </location>
</feature>
<feature type="sequence conflict" description="In Ref. 2; CAB37841." evidence="2" ref="2">
    <original>CII</original>
    <variation>SYY</variation>
    <location>
        <begin position="472"/>
        <end position="474"/>
    </location>
</feature>
<protein>
    <recommendedName>
        <fullName>Glucose-1-phosphate adenylyltransferase large subunit 1, chloroplastic/amyloplastic</fullName>
        <ecNumber>2.7.7.27</ecNumber>
    </recommendedName>
    <alternativeName>
        <fullName>ADP-glucose pyrophosphorylase</fullName>
    </alternativeName>
    <alternativeName>
        <fullName>ADP-glucose synthase</fullName>
    </alternativeName>
    <alternativeName>
        <fullName>AGPase S</fullName>
    </alternativeName>
    <alternativeName>
        <fullName>Alpha-D-glucose-1-phosphate adenyl transferase</fullName>
    </alternativeName>
    <alternativeName>
        <fullName>BEPL</fullName>
    </alternativeName>
</protein>